<gene>
    <name evidence="1" type="primary">hisE</name>
    <name type="ordered locus">RER_31850</name>
</gene>
<evidence type="ECO:0000255" key="1">
    <source>
        <dbReference type="HAMAP-Rule" id="MF_01020"/>
    </source>
</evidence>
<feature type="chain" id="PRO_1000213289" description="Phosphoribosyl-ATP pyrophosphatase">
    <location>
        <begin position="1"/>
        <end position="93"/>
    </location>
</feature>
<keyword id="KW-0028">Amino-acid biosynthesis</keyword>
<keyword id="KW-0067">ATP-binding</keyword>
<keyword id="KW-0963">Cytoplasm</keyword>
<keyword id="KW-0368">Histidine biosynthesis</keyword>
<keyword id="KW-0378">Hydrolase</keyword>
<keyword id="KW-0547">Nucleotide-binding</keyword>
<accession>C0ZZV8</accession>
<sequence>MKECVPVKTFESLFAELTERAATRPEGSGTVAALDAGVHAQGKKVIEEAGEVWIAAEYQSDEQLAEEISQLLYWTQVLMVGRGLTLEDVYRHL</sequence>
<dbReference type="EC" id="3.6.1.31" evidence="1"/>
<dbReference type="EMBL" id="AP008957">
    <property type="protein sequence ID" value="BAH33893.1"/>
    <property type="molecule type" value="Genomic_DNA"/>
</dbReference>
<dbReference type="SMR" id="C0ZZV8"/>
<dbReference type="KEGG" id="rer:RER_31850"/>
<dbReference type="eggNOG" id="COG0140">
    <property type="taxonomic scope" value="Bacteria"/>
</dbReference>
<dbReference type="HOGENOM" id="CLU_123337_2_0_11"/>
<dbReference type="UniPathway" id="UPA00031">
    <property type="reaction ID" value="UER00007"/>
</dbReference>
<dbReference type="Proteomes" id="UP000002204">
    <property type="component" value="Chromosome"/>
</dbReference>
<dbReference type="GO" id="GO:0005737">
    <property type="term" value="C:cytoplasm"/>
    <property type="evidence" value="ECO:0007669"/>
    <property type="project" value="UniProtKB-SubCell"/>
</dbReference>
<dbReference type="GO" id="GO:0005524">
    <property type="term" value="F:ATP binding"/>
    <property type="evidence" value="ECO:0007669"/>
    <property type="project" value="UniProtKB-KW"/>
</dbReference>
<dbReference type="GO" id="GO:0004636">
    <property type="term" value="F:phosphoribosyl-ATP diphosphatase activity"/>
    <property type="evidence" value="ECO:0007669"/>
    <property type="project" value="UniProtKB-UniRule"/>
</dbReference>
<dbReference type="GO" id="GO:0000105">
    <property type="term" value="P:L-histidine biosynthetic process"/>
    <property type="evidence" value="ECO:0007669"/>
    <property type="project" value="UniProtKB-UniRule"/>
</dbReference>
<dbReference type="CDD" id="cd11547">
    <property type="entry name" value="NTP-PPase_HisE"/>
    <property type="match status" value="1"/>
</dbReference>
<dbReference type="Gene3D" id="1.10.287.1080">
    <property type="entry name" value="MazG-like"/>
    <property type="match status" value="1"/>
</dbReference>
<dbReference type="HAMAP" id="MF_01020">
    <property type="entry name" value="HisE"/>
    <property type="match status" value="1"/>
</dbReference>
<dbReference type="InterPro" id="IPR008179">
    <property type="entry name" value="HisE"/>
</dbReference>
<dbReference type="InterPro" id="IPR021130">
    <property type="entry name" value="PRib-ATP_PPHydrolase-like"/>
</dbReference>
<dbReference type="NCBIfam" id="TIGR03188">
    <property type="entry name" value="histidine_hisI"/>
    <property type="match status" value="1"/>
</dbReference>
<dbReference type="NCBIfam" id="NF001610">
    <property type="entry name" value="PRK00400.1-1"/>
    <property type="match status" value="1"/>
</dbReference>
<dbReference type="PANTHER" id="PTHR42945">
    <property type="entry name" value="HISTIDINE BIOSYNTHESIS BIFUNCTIONAL PROTEIN"/>
    <property type="match status" value="1"/>
</dbReference>
<dbReference type="PANTHER" id="PTHR42945:SF1">
    <property type="entry name" value="HISTIDINE BIOSYNTHESIS BIFUNCTIONAL PROTEIN HIS7"/>
    <property type="match status" value="1"/>
</dbReference>
<dbReference type="Pfam" id="PF01503">
    <property type="entry name" value="PRA-PH"/>
    <property type="match status" value="1"/>
</dbReference>
<dbReference type="SUPFAM" id="SSF101386">
    <property type="entry name" value="all-alpha NTP pyrophosphatases"/>
    <property type="match status" value="1"/>
</dbReference>
<protein>
    <recommendedName>
        <fullName evidence="1">Phosphoribosyl-ATP pyrophosphatase</fullName>
        <shortName evidence="1">PRA-PH</shortName>
        <ecNumber evidence="1">3.6.1.31</ecNumber>
    </recommendedName>
</protein>
<reference key="1">
    <citation type="submission" date="2005-03" db="EMBL/GenBank/DDBJ databases">
        <title>Comparison of the complete genome sequences of Rhodococcus erythropolis PR4 and Rhodococcus opacus B4.</title>
        <authorList>
            <person name="Takarada H."/>
            <person name="Sekine M."/>
            <person name="Hosoyama A."/>
            <person name="Yamada R."/>
            <person name="Fujisawa T."/>
            <person name="Omata S."/>
            <person name="Shimizu A."/>
            <person name="Tsukatani N."/>
            <person name="Tanikawa S."/>
            <person name="Fujita N."/>
            <person name="Harayama S."/>
        </authorList>
    </citation>
    <scope>NUCLEOTIDE SEQUENCE [LARGE SCALE GENOMIC DNA]</scope>
    <source>
        <strain>PR4 / NBRC 100887</strain>
    </source>
</reference>
<comment type="catalytic activity">
    <reaction evidence="1">
        <text>1-(5-phospho-beta-D-ribosyl)-ATP + H2O = 1-(5-phospho-beta-D-ribosyl)-5'-AMP + diphosphate + H(+)</text>
        <dbReference type="Rhea" id="RHEA:22828"/>
        <dbReference type="ChEBI" id="CHEBI:15377"/>
        <dbReference type="ChEBI" id="CHEBI:15378"/>
        <dbReference type="ChEBI" id="CHEBI:33019"/>
        <dbReference type="ChEBI" id="CHEBI:59457"/>
        <dbReference type="ChEBI" id="CHEBI:73183"/>
        <dbReference type="EC" id="3.6.1.31"/>
    </reaction>
</comment>
<comment type="pathway">
    <text evidence="1">Amino-acid biosynthesis; L-histidine biosynthesis; L-histidine from 5-phospho-alpha-D-ribose 1-diphosphate: step 2/9.</text>
</comment>
<comment type="subcellular location">
    <subcellularLocation>
        <location evidence="1">Cytoplasm</location>
    </subcellularLocation>
</comment>
<comment type="similarity">
    <text evidence="1">Belongs to the PRA-PH family.</text>
</comment>
<name>HIS2_RHOE4</name>
<organism>
    <name type="scientific">Rhodococcus erythropolis (strain PR4 / NBRC 100887)</name>
    <dbReference type="NCBI Taxonomy" id="234621"/>
    <lineage>
        <taxon>Bacteria</taxon>
        <taxon>Bacillati</taxon>
        <taxon>Actinomycetota</taxon>
        <taxon>Actinomycetes</taxon>
        <taxon>Mycobacteriales</taxon>
        <taxon>Nocardiaceae</taxon>
        <taxon>Rhodococcus</taxon>
        <taxon>Rhodococcus erythropolis group</taxon>
    </lineage>
</organism>
<proteinExistence type="inferred from homology"/>